<name>KEFC_ECO8A</name>
<feature type="chain" id="PRO_1000145538" description="Glutathione-regulated potassium-efflux system protein KefC">
    <location>
        <begin position="1"/>
        <end position="620"/>
    </location>
</feature>
<feature type="transmembrane region" description="Helical" evidence="1">
    <location>
        <begin position="4"/>
        <end position="24"/>
    </location>
</feature>
<feature type="transmembrane region" description="Helical" evidence="1">
    <location>
        <begin position="26"/>
        <end position="46"/>
    </location>
</feature>
<feature type="transmembrane region" description="Helical" evidence="1">
    <location>
        <begin position="54"/>
        <end position="74"/>
    </location>
</feature>
<feature type="transmembrane region" description="Helical" evidence="1">
    <location>
        <begin position="90"/>
        <end position="110"/>
    </location>
</feature>
<feature type="transmembrane region" description="Helical" evidence="1">
    <location>
        <begin position="114"/>
        <end position="134"/>
    </location>
</feature>
<feature type="transmembrane region" description="Helical" evidence="1">
    <location>
        <begin position="149"/>
        <end position="169"/>
    </location>
</feature>
<feature type="transmembrane region" description="Helical" evidence="1">
    <location>
        <begin position="178"/>
        <end position="198"/>
    </location>
</feature>
<feature type="transmembrane region" description="Helical" evidence="1">
    <location>
        <begin position="218"/>
        <end position="238"/>
    </location>
</feature>
<feature type="transmembrane region" description="Helical" evidence="1">
    <location>
        <begin position="270"/>
        <end position="290"/>
    </location>
</feature>
<feature type="transmembrane region" description="Helical" evidence="1">
    <location>
        <begin position="294"/>
        <end position="314"/>
    </location>
</feature>
<feature type="transmembrane region" description="Helical" evidence="1">
    <location>
        <begin position="327"/>
        <end position="347"/>
    </location>
</feature>
<feature type="transmembrane region" description="Helical" evidence="1">
    <location>
        <begin position="359"/>
        <end position="379"/>
    </location>
</feature>
<feature type="domain" description="RCK N-terminal" evidence="2">
    <location>
        <begin position="399"/>
        <end position="518"/>
    </location>
</feature>
<feature type="region of interest" description="Disordered" evidence="3">
    <location>
        <begin position="597"/>
        <end position="620"/>
    </location>
</feature>
<organism>
    <name type="scientific">Escherichia coli O8 (strain IAI1)</name>
    <dbReference type="NCBI Taxonomy" id="585034"/>
    <lineage>
        <taxon>Bacteria</taxon>
        <taxon>Pseudomonadati</taxon>
        <taxon>Pseudomonadota</taxon>
        <taxon>Gammaproteobacteria</taxon>
        <taxon>Enterobacterales</taxon>
        <taxon>Enterobacteriaceae</taxon>
        <taxon>Escherichia</taxon>
    </lineage>
</organism>
<gene>
    <name evidence="1" type="primary">kefC</name>
    <name type="ordered locus">ECIAI1_0049</name>
</gene>
<keyword id="KW-0050">Antiport</keyword>
<keyword id="KW-0997">Cell inner membrane</keyword>
<keyword id="KW-1003">Cell membrane</keyword>
<keyword id="KW-0406">Ion transport</keyword>
<keyword id="KW-0472">Membrane</keyword>
<keyword id="KW-0630">Potassium</keyword>
<keyword id="KW-0633">Potassium transport</keyword>
<keyword id="KW-0812">Transmembrane</keyword>
<keyword id="KW-1133">Transmembrane helix</keyword>
<keyword id="KW-0813">Transport</keyword>
<reference key="1">
    <citation type="journal article" date="2009" name="PLoS Genet.">
        <title>Organised genome dynamics in the Escherichia coli species results in highly diverse adaptive paths.</title>
        <authorList>
            <person name="Touchon M."/>
            <person name="Hoede C."/>
            <person name="Tenaillon O."/>
            <person name="Barbe V."/>
            <person name="Baeriswyl S."/>
            <person name="Bidet P."/>
            <person name="Bingen E."/>
            <person name="Bonacorsi S."/>
            <person name="Bouchier C."/>
            <person name="Bouvet O."/>
            <person name="Calteau A."/>
            <person name="Chiapello H."/>
            <person name="Clermont O."/>
            <person name="Cruveiller S."/>
            <person name="Danchin A."/>
            <person name="Diard M."/>
            <person name="Dossat C."/>
            <person name="Karoui M.E."/>
            <person name="Frapy E."/>
            <person name="Garry L."/>
            <person name="Ghigo J.M."/>
            <person name="Gilles A.M."/>
            <person name="Johnson J."/>
            <person name="Le Bouguenec C."/>
            <person name="Lescat M."/>
            <person name="Mangenot S."/>
            <person name="Martinez-Jehanne V."/>
            <person name="Matic I."/>
            <person name="Nassif X."/>
            <person name="Oztas S."/>
            <person name="Petit M.A."/>
            <person name="Pichon C."/>
            <person name="Rouy Z."/>
            <person name="Ruf C.S."/>
            <person name="Schneider D."/>
            <person name="Tourret J."/>
            <person name="Vacherie B."/>
            <person name="Vallenet D."/>
            <person name="Medigue C."/>
            <person name="Rocha E.P.C."/>
            <person name="Denamur E."/>
        </authorList>
    </citation>
    <scope>NUCLEOTIDE SEQUENCE [LARGE SCALE GENOMIC DNA]</scope>
    <source>
        <strain>IAI1</strain>
    </source>
</reference>
<dbReference type="EMBL" id="CU928160">
    <property type="protein sequence ID" value="CAQ96939.1"/>
    <property type="molecule type" value="Genomic_DNA"/>
</dbReference>
<dbReference type="RefSeq" id="WP_000377129.1">
    <property type="nucleotide sequence ID" value="NC_011741.1"/>
</dbReference>
<dbReference type="SMR" id="B7M0E4"/>
<dbReference type="KEGG" id="ecr:ECIAI1_0049"/>
<dbReference type="HOGENOM" id="CLU_005126_9_3_6"/>
<dbReference type="GO" id="GO:0005886">
    <property type="term" value="C:plasma membrane"/>
    <property type="evidence" value="ECO:0007669"/>
    <property type="project" value="UniProtKB-SubCell"/>
</dbReference>
<dbReference type="GO" id="GO:0019899">
    <property type="term" value="F:enzyme binding"/>
    <property type="evidence" value="ECO:0007669"/>
    <property type="project" value="InterPro"/>
</dbReference>
<dbReference type="GO" id="GO:0015503">
    <property type="term" value="F:glutathione-regulated potassium exporter activity"/>
    <property type="evidence" value="ECO:0007669"/>
    <property type="project" value="UniProtKB-UniRule"/>
</dbReference>
<dbReference type="GO" id="GO:0015643">
    <property type="term" value="F:toxic substance binding"/>
    <property type="evidence" value="ECO:0007669"/>
    <property type="project" value="InterPro"/>
</dbReference>
<dbReference type="GO" id="GO:1902600">
    <property type="term" value="P:proton transmembrane transport"/>
    <property type="evidence" value="ECO:0007669"/>
    <property type="project" value="InterPro"/>
</dbReference>
<dbReference type="GO" id="GO:0051595">
    <property type="term" value="P:response to methylglyoxal"/>
    <property type="evidence" value="ECO:0007669"/>
    <property type="project" value="InterPro"/>
</dbReference>
<dbReference type="FunFam" id="1.20.1530.20:FF:000001">
    <property type="entry name" value="Glutathione-regulated potassium-efflux system protein KefB"/>
    <property type="match status" value="1"/>
</dbReference>
<dbReference type="FunFam" id="3.40.50.720:FF:000036">
    <property type="entry name" value="Glutathione-regulated potassium-efflux system protein KefB"/>
    <property type="match status" value="1"/>
</dbReference>
<dbReference type="Gene3D" id="1.20.1530.20">
    <property type="match status" value="1"/>
</dbReference>
<dbReference type="Gene3D" id="3.40.50.720">
    <property type="entry name" value="NAD(P)-binding Rossmann-like Domain"/>
    <property type="match status" value="1"/>
</dbReference>
<dbReference type="HAMAP" id="MF_01413">
    <property type="entry name" value="K_H_efflux_KefC"/>
    <property type="match status" value="1"/>
</dbReference>
<dbReference type="InterPro" id="IPR006153">
    <property type="entry name" value="Cation/H_exchanger_TM"/>
</dbReference>
<dbReference type="InterPro" id="IPR004771">
    <property type="entry name" value="K/H_exchanger"/>
</dbReference>
<dbReference type="InterPro" id="IPR023941">
    <property type="entry name" value="K_H_efflux_KefC"/>
</dbReference>
<dbReference type="InterPro" id="IPR006036">
    <property type="entry name" value="K_uptake_TrkA"/>
</dbReference>
<dbReference type="InterPro" id="IPR038770">
    <property type="entry name" value="Na+/solute_symporter_sf"/>
</dbReference>
<dbReference type="InterPro" id="IPR036291">
    <property type="entry name" value="NAD(P)-bd_dom_sf"/>
</dbReference>
<dbReference type="InterPro" id="IPR003148">
    <property type="entry name" value="RCK_N"/>
</dbReference>
<dbReference type="NCBIfam" id="TIGR00932">
    <property type="entry name" value="2a37"/>
    <property type="match status" value="1"/>
</dbReference>
<dbReference type="NCBIfam" id="NF002924">
    <property type="entry name" value="PRK03562.1"/>
    <property type="match status" value="1"/>
</dbReference>
<dbReference type="PANTHER" id="PTHR46157:SF3">
    <property type="entry name" value="GLUTATHIONE-REGULATED POTASSIUM-EFFLUX SYSTEM PROTEIN KEFC"/>
    <property type="match status" value="1"/>
</dbReference>
<dbReference type="PANTHER" id="PTHR46157">
    <property type="entry name" value="K(+) EFFLUX ANTIPORTER 3, CHLOROPLASTIC"/>
    <property type="match status" value="1"/>
</dbReference>
<dbReference type="Pfam" id="PF00999">
    <property type="entry name" value="Na_H_Exchanger"/>
    <property type="match status" value="1"/>
</dbReference>
<dbReference type="Pfam" id="PF02254">
    <property type="entry name" value="TrkA_N"/>
    <property type="match status" value="1"/>
</dbReference>
<dbReference type="PRINTS" id="PR00335">
    <property type="entry name" value="KUPTAKETRKA"/>
</dbReference>
<dbReference type="SUPFAM" id="SSF51735">
    <property type="entry name" value="NAD(P)-binding Rossmann-fold domains"/>
    <property type="match status" value="1"/>
</dbReference>
<dbReference type="PROSITE" id="PS51201">
    <property type="entry name" value="RCK_N"/>
    <property type="match status" value="1"/>
</dbReference>
<accession>B7M0E4</accession>
<comment type="function">
    <text evidence="1">Pore-forming subunit of a potassium efflux system that confers protection against electrophiles. Catalyzes K(+)/H(+) antiport.</text>
</comment>
<comment type="subunit">
    <text evidence="1">Homodimer. Interacts with the regulatory subunit KefF.</text>
</comment>
<comment type="subcellular location">
    <subcellularLocation>
        <location evidence="1">Cell inner membrane</location>
        <topology evidence="1">Multi-pass membrane protein</topology>
    </subcellularLocation>
</comment>
<comment type="similarity">
    <text evidence="1">Belongs to the monovalent cation:proton antiporter 2 (CPA2) transporter (TC 2.A.37) family. KefC subfamily.</text>
</comment>
<proteinExistence type="inferred from homology"/>
<protein>
    <recommendedName>
        <fullName evidence="1">Glutathione-regulated potassium-efflux system protein KefC</fullName>
    </recommendedName>
    <alternativeName>
        <fullName evidence="1">K(+)/H(+) antiporter</fullName>
    </alternativeName>
</protein>
<evidence type="ECO:0000255" key="1">
    <source>
        <dbReference type="HAMAP-Rule" id="MF_01413"/>
    </source>
</evidence>
<evidence type="ECO:0000255" key="2">
    <source>
        <dbReference type="PROSITE-ProRule" id="PRU00543"/>
    </source>
</evidence>
<evidence type="ECO:0000256" key="3">
    <source>
        <dbReference type="SAM" id="MobiDB-lite"/>
    </source>
</evidence>
<sequence length="620" mass="67750">MDSHTLIQALIYLGSAALIVPIAVRLGLGSVLGYLIAGCIIGPWGLRLVTDAESILHFAEIGVVLMLFIIGLELDPQRLWKLRAAVFGGGALQMVICGGLLGLFCMLLGLRWQVAELIGMTLALSSTAIAMQAMNERNLMVTQMGRSAFAVLLFQDIAAIPLVAMIPLLATSSASTTMGAFALSALKVAGALVLVVLLGRYVTRPALRFVARSGLREVFSAVALFLVFGFGLLLEEVGLSMAMGAFLAGVLLASSEYRHALESDIEPFKGLLLGLFFIGVGMSIDFGTLLENPLRIVILLLGFLIIKIAMLWLIARPLQVPNKQRRWFAVLLGQGSEFAFVVFGAAQMANVLEPEWAKSLTLAVALSMAATPILLVILNRLEQSSTEEAREADEIDEEQPRVIIAGFGRFGQITGRLLLSSGVKMVVLDHDPDHIETLRKFGMKVFYGDATRMDLLESAGAAKAEVLINAIDDPQTNLQLTEMVKEHFPHLQIIARARDVDHYIRLRQAGVEKPERETFEGALKTGRLALESLGLGPYEARERADVFRRFNIQMVEEMAMVENDTKARAAVYKRTSAMLSEIITEDREHLSLIQRHGWQGTEEGKHTGNMADEPETKPSS</sequence>